<organism>
    <name type="scientific">Yarrowia lipolytica (strain CLIB 122 / E 150)</name>
    <name type="common">Yeast</name>
    <name type="synonym">Candida lipolytica</name>
    <dbReference type="NCBI Taxonomy" id="284591"/>
    <lineage>
        <taxon>Eukaryota</taxon>
        <taxon>Fungi</taxon>
        <taxon>Dikarya</taxon>
        <taxon>Ascomycota</taxon>
        <taxon>Saccharomycotina</taxon>
        <taxon>Dipodascomycetes</taxon>
        <taxon>Dipodascales</taxon>
        <taxon>Dipodascales incertae sedis</taxon>
        <taxon>Yarrowia</taxon>
    </lineage>
</organism>
<keyword id="KW-0539">Nucleus</keyword>
<keyword id="KW-1185">Reference proteome</keyword>
<keyword id="KW-0687">Ribonucleoprotein</keyword>
<keyword id="KW-0690">Ribosome biogenesis</keyword>
<comment type="function">
    <text evidence="1">Required for efficient biogenesis of the 60S ribosomal subunit.</text>
</comment>
<comment type="subunit">
    <text evidence="1">Associates with nucleolar pre-ribosomal particles.</text>
</comment>
<comment type="subcellular location">
    <subcellularLocation>
        <location evidence="1">Nucleus</location>
        <location evidence="1">Nucleolus</location>
    </subcellularLocation>
</comment>
<comment type="similarity">
    <text evidence="3">Belongs to the RSA3 family.</text>
</comment>
<reference key="1">
    <citation type="journal article" date="2004" name="Nature">
        <title>Genome evolution in yeasts.</title>
        <authorList>
            <person name="Dujon B."/>
            <person name="Sherman D."/>
            <person name="Fischer G."/>
            <person name="Durrens P."/>
            <person name="Casaregola S."/>
            <person name="Lafontaine I."/>
            <person name="de Montigny J."/>
            <person name="Marck C."/>
            <person name="Neuveglise C."/>
            <person name="Talla E."/>
            <person name="Goffard N."/>
            <person name="Frangeul L."/>
            <person name="Aigle M."/>
            <person name="Anthouard V."/>
            <person name="Babour A."/>
            <person name="Barbe V."/>
            <person name="Barnay S."/>
            <person name="Blanchin S."/>
            <person name="Beckerich J.-M."/>
            <person name="Beyne E."/>
            <person name="Bleykasten C."/>
            <person name="Boisrame A."/>
            <person name="Boyer J."/>
            <person name="Cattolico L."/>
            <person name="Confanioleri F."/>
            <person name="de Daruvar A."/>
            <person name="Despons L."/>
            <person name="Fabre E."/>
            <person name="Fairhead C."/>
            <person name="Ferry-Dumazet H."/>
            <person name="Groppi A."/>
            <person name="Hantraye F."/>
            <person name="Hennequin C."/>
            <person name="Jauniaux N."/>
            <person name="Joyet P."/>
            <person name="Kachouri R."/>
            <person name="Kerrest A."/>
            <person name="Koszul R."/>
            <person name="Lemaire M."/>
            <person name="Lesur I."/>
            <person name="Ma L."/>
            <person name="Muller H."/>
            <person name="Nicaud J.-M."/>
            <person name="Nikolski M."/>
            <person name="Oztas S."/>
            <person name="Ozier-Kalogeropoulos O."/>
            <person name="Pellenz S."/>
            <person name="Potier S."/>
            <person name="Richard G.-F."/>
            <person name="Straub M.-L."/>
            <person name="Suleau A."/>
            <person name="Swennen D."/>
            <person name="Tekaia F."/>
            <person name="Wesolowski-Louvel M."/>
            <person name="Westhof E."/>
            <person name="Wirth B."/>
            <person name="Zeniou-Meyer M."/>
            <person name="Zivanovic Y."/>
            <person name="Bolotin-Fukuhara M."/>
            <person name="Thierry A."/>
            <person name="Bouchier C."/>
            <person name="Caudron B."/>
            <person name="Scarpelli C."/>
            <person name="Gaillardin C."/>
            <person name="Weissenbach J."/>
            <person name="Wincker P."/>
            <person name="Souciet J.-L."/>
        </authorList>
    </citation>
    <scope>NUCLEOTIDE SEQUENCE [LARGE SCALE GENOMIC DNA]</scope>
    <source>
        <strain>CLIB 122 / E 150</strain>
    </source>
</reference>
<dbReference type="EMBL" id="CR382130">
    <property type="protein sequence ID" value="CAG81394.1"/>
    <property type="molecule type" value="Genomic_DNA"/>
</dbReference>
<dbReference type="RefSeq" id="XP_503194.1">
    <property type="nucleotide sequence ID" value="XM_503194.1"/>
</dbReference>
<dbReference type="SMR" id="Q6C818"/>
<dbReference type="STRING" id="284591.Q6C818"/>
<dbReference type="EnsemblFungi" id="CAG81394">
    <property type="protein sequence ID" value="CAG81394"/>
    <property type="gene ID" value="YALI0_D23551g"/>
</dbReference>
<dbReference type="KEGG" id="yli:2910323"/>
<dbReference type="VEuPathDB" id="FungiDB:YALI0_D23551g"/>
<dbReference type="HOGENOM" id="CLU_124032_0_0_1"/>
<dbReference type="InParanoid" id="Q6C818"/>
<dbReference type="OMA" id="QGESMFS"/>
<dbReference type="OrthoDB" id="123544at4891"/>
<dbReference type="Proteomes" id="UP000001300">
    <property type="component" value="Chromosome D"/>
</dbReference>
<dbReference type="GO" id="GO:0005730">
    <property type="term" value="C:nucleolus"/>
    <property type="evidence" value="ECO:0007669"/>
    <property type="project" value="UniProtKB-SubCell"/>
</dbReference>
<dbReference type="GO" id="GO:0030687">
    <property type="term" value="C:preribosome, large subunit precursor"/>
    <property type="evidence" value="ECO:0000318"/>
    <property type="project" value="GO_Central"/>
</dbReference>
<dbReference type="GO" id="GO:0000027">
    <property type="term" value="P:ribosomal large subunit assembly"/>
    <property type="evidence" value="ECO:0000318"/>
    <property type="project" value="GO_Central"/>
</dbReference>
<dbReference type="InterPro" id="IPR051898">
    <property type="entry name" value="Ribosome_Assembly_3"/>
</dbReference>
<dbReference type="InterPro" id="IPR028217">
    <property type="entry name" value="Rsa3_C"/>
</dbReference>
<dbReference type="PANTHER" id="PTHR28127">
    <property type="entry name" value="RIBOSOME ASSEMBLY PROTEIN 3"/>
    <property type="match status" value="1"/>
</dbReference>
<dbReference type="PANTHER" id="PTHR28127:SF1">
    <property type="entry name" value="RIBOSOME ASSEMBLY PROTEIN 3"/>
    <property type="match status" value="1"/>
</dbReference>
<dbReference type="Pfam" id="PF14615">
    <property type="entry name" value="Rsa3"/>
    <property type="match status" value="1"/>
</dbReference>
<protein>
    <recommendedName>
        <fullName>Ribosome assembly protein 3</fullName>
    </recommendedName>
</protein>
<name>RSA3_YARLI</name>
<sequence>MSAKSDSRNNKAVKSDEPKKRRRKKARTAEVSDSDSSDSESDRAEEDDNEDNEDTTNHVIDEGDVEMMEFDKDDAAAAASAQTMDIPAELQSLPADSANPEFQKFYLNLVTSEFGKDMDELRTSKTFNDNTLGLLVDALKQGVNVFDEKVQGEIVQQQS</sequence>
<feature type="chain" id="PRO_0000097467" description="Ribosome assembly protein 3">
    <location>
        <begin position="1"/>
        <end position="159"/>
    </location>
</feature>
<feature type="region of interest" description="Disordered" evidence="2">
    <location>
        <begin position="1"/>
        <end position="63"/>
    </location>
</feature>
<feature type="compositionally biased region" description="Basic and acidic residues" evidence="2">
    <location>
        <begin position="1"/>
        <end position="19"/>
    </location>
</feature>
<feature type="compositionally biased region" description="Acidic residues" evidence="2">
    <location>
        <begin position="32"/>
        <end position="54"/>
    </location>
</feature>
<accession>Q6C818</accession>
<gene>
    <name type="primary">RSA3</name>
    <name type="ordered locus">YALI0D23551g</name>
</gene>
<proteinExistence type="inferred from homology"/>
<evidence type="ECO:0000250" key="1"/>
<evidence type="ECO:0000256" key="2">
    <source>
        <dbReference type="SAM" id="MobiDB-lite"/>
    </source>
</evidence>
<evidence type="ECO:0000305" key="3"/>